<evidence type="ECO:0000255" key="1">
    <source>
        <dbReference type="HAMAP-Rule" id="MF_00655"/>
    </source>
</evidence>
<reference key="1">
    <citation type="journal article" date="2006" name="Nat. Biotechnol.">
        <title>Complete genome sequence of the entomopathogenic and metabolically versatile soil bacterium Pseudomonas entomophila.</title>
        <authorList>
            <person name="Vodovar N."/>
            <person name="Vallenet D."/>
            <person name="Cruveiller S."/>
            <person name="Rouy Z."/>
            <person name="Barbe V."/>
            <person name="Acosta C."/>
            <person name="Cattolico L."/>
            <person name="Jubin C."/>
            <person name="Lajus A."/>
            <person name="Segurens B."/>
            <person name="Vacherie B."/>
            <person name="Wincker P."/>
            <person name="Weissenbach J."/>
            <person name="Lemaitre B."/>
            <person name="Medigue C."/>
            <person name="Boccard F."/>
        </authorList>
    </citation>
    <scope>NUCLEOTIDE SEQUENCE [LARGE SCALE GENOMIC DNA]</scope>
    <source>
        <strain>L48</strain>
    </source>
</reference>
<gene>
    <name evidence="1" type="primary">pqqD</name>
    <name type="ordered locus">PSEEN0395</name>
</gene>
<dbReference type="EMBL" id="CT573326">
    <property type="protein sequence ID" value="CAK13354.1"/>
    <property type="molecule type" value="Genomic_DNA"/>
</dbReference>
<dbReference type="RefSeq" id="WP_011531813.1">
    <property type="nucleotide sequence ID" value="NC_008027.1"/>
</dbReference>
<dbReference type="SMR" id="Q1IG48"/>
<dbReference type="STRING" id="384676.PSEEN0395"/>
<dbReference type="GeneID" id="32803735"/>
<dbReference type="KEGG" id="pen:PSEEN0395"/>
<dbReference type="eggNOG" id="ENOG5032Z81">
    <property type="taxonomic scope" value="Bacteria"/>
</dbReference>
<dbReference type="HOGENOM" id="CLU_163864_2_1_6"/>
<dbReference type="OrthoDB" id="7356791at2"/>
<dbReference type="UniPathway" id="UPA00539"/>
<dbReference type="Proteomes" id="UP000000658">
    <property type="component" value="Chromosome"/>
</dbReference>
<dbReference type="GO" id="GO:0048038">
    <property type="term" value="F:quinone binding"/>
    <property type="evidence" value="ECO:0007669"/>
    <property type="project" value="InterPro"/>
</dbReference>
<dbReference type="GO" id="GO:0018189">
    <property type="term" value="P:pyrroloquinoline quinone biosynthetic process"/>
    <property type="evidence" value="ECO:0007669"/>
    <property type="project" value="UniProtKB-UniRule"/>
</dbReference>
<dbReference type="Gene3D" id="1.10.10.1150">
    <property type="entry name" value="Coenzyme PQQ synthesis protein D (PqqD)"/>
    <property type="match status" value="1"/>
</dbReference>
<dbReference type="HAMAP" id="MF_00655">
    <property type="entry name" value="PQQ_syn_PqqD"/>
    <property type="match status" value="1"/>
</dbReference>
<dbReference type="InterPro" id="IPR008792">
    <property type="entry name" value="PQQD"/>
</dbReference>
<dbReference type="InterPro" id="IPR022479">
    <property type="entry name" value="PqqD_bac"/>
</dbReference>
<dbReference type="InterPro" id="IPR041881">
    <property type="entry name" value="PqqD_sf"/>
</dbReference>
<dbReference type="NCBIfam" id="TIGR03859">
    <property type="entry name" value="PQQ_PqqD"/>
    <property type="match status" value="1"/>
</dbReference>
<dbReference type="NCBIfam" id="NF002535">
    <property type="entry name" value="PRK02079.1"/>
    <property type="match status" value="1"/>
</dbReference>
<dbReference type="Pfam" id="PF05402">
    <property type="entry name" value="PqqD"/>
    <property type="match status" value="1"/>
</dbReference>
<accession>Q1IG48</accession>
<comment type="function">
    <text evidence="1">Functions as a PqqA binding protein and presents PqqA to PqqE, in the pyrroloquinoline quinone (PQQ) biosynthetic pathway.</text>
</comment>
<comment type="pathway">
    <text evidence="1">Cofactor biosynthesis; pyrroloquinoline quinone biosynthesis.</text>
</comment>
<comment type="subunit">
    <text evidence="1">Monomer. Interacts with PqqE.</text>
</comment>
<comment type="similarity">
    <text evidence="1">Belongs to the PqqD family.</text>
</comment>
<name>PQQD_PSEE4</name>
<feature type="chain" id="PRO_1000061686" description="PqqA binding protein">
    <location>
        <begin position="1"/>
        <end position="91"/>
    </location>
</feature>
<organism>
    <name type="scientific">Pseudomonas entomophila (strain L48)</name>
    <dbReference type="NCBI Taxonomy" id="384676"/>
    <lineage>
        <taxon>Bacteria</taxon>
        <taxon>Pseudomonadati</taxon>
        <taxon>Pseudomonadota</taxon>
        <taxon>Gammaproteobacteria</taxon>
        <taxon>Pseudomonadales</taxon>
        <taxon>Pseudomonadaceae</taxon>
        <taxon>Pseudomonas</taxon>
    </lineage>
</organism>
<keyword id="KW-0884">PQQ biosynthesis</keyword>
<protein>
    <recommendedName>
        <fullName evidence="1">PqqA binding protein</fullName>
    </recommendedName>
    <alternativeName>
        <fullName evidence="1">Coenzyme PQQ synthesis protein D</fullName>
    </alternativeName>
    <alternativeName>
        <fullName evidence="1">Pyrroloquinoline quinone biosynthesis protein D</fullName>
    </alternativeName>
</protein>
<proteinExistence type="inferred from homology"/>
<sequence length="91" mass="10256">MSFDRQQVPAWRPGYRFQYEPAQKGHVLLYPEGMIKLNDSAGLIGGLIDGQRSVAAIIDELQQQFPGVPEVADDIEQFMEVARAEHWITLA</sequence>